<feature type="chain" id="PRO_0000129396" description="Large ribosomal subunit protein uL23">
    <location>
        <begin position="1"/>
        <end position="96"/>
    </location>
</feature>
<accession>Q9Z9L2</accession>
<accession>Q9JPY4</accession>
<name>RL23_HALH5</name>
<proteinExistence type="inferred from homology"/>
<protein>
    <recommendedName>
        <fullName evidence="1">Large ribosomal subunit protein uL23</fullName>
    </recommendedName>
    <alternativeName>
        <fullName evidence="2">50S ribosomal protein L23</fullName>
    </alternativeName>
</protein>
<sequence>MSNARDVIKRPVITERSTEVMGDKKYTFEVDVRANKTQIKDAIEEIFDVKVAKVNTMNYKGKPKRFGRYTGFTARRKKAIVTLTPDSKELDFFEGV</sequence>
<gene>
    <name evidence="1" type="primary">rplW</name>
    <name type="ordered locus">BH0136</name>
</gene>
<evidence type="ECO:0000255" key="1">
    <source>
        <dbReference type="HAMAP-Rule" id="MF_01369"/>
    </source>
</evidence>
<evidence type="ECO:0000305" key="2"/>
<keyword id="KW-1185">Reference proteome</keyword>
<keyword id="KW-0687">Ribonucleoprotein</keyword>
<keyword id="KW-0689">Ribosomal protein</keyword>
<keyword id="KW-0694">RNA-binding</keyword>
<keyword id="KW-0699">rRNA-binding</keyword>
<organism>
    <name type="scientific">Halalkalibacterium halodurans (strain ATCC BAA-125 / DSM 18197 / FERM 7344 / JCM 9153 / C-125)</name>
    <name type="common">Bacillus halodurans</name>
    <dbReference type="NCBI Taxonomy" id="272558"/>
    <lineage>
        <taxon>Bacteria</taxon>
        <taxon>Bacillati</taxon>
        <taxon>Bacillota</taxon>
        <taxon>Bacilli</taxon>
        <taxon>Bacillales</taxon>
        <taxon>Bacillaceae</taxon>
        <taxon>Halalkalibacterium (ex Joshi et al. 2022)</taxon>
    </lineage>
</organism>
<reference key="1">
    <citation type="journal article" date="1999" name="Biosci. Biotechnol. Biochem.">
        <title>Sequence analysis of a 32-kb region including the major ribosomal protein gene clusters from alkaliphilic Bacillus sp. strain C-125.</title>
        <authorList>
            <person name="Takami H."/>
            <person name="Takaki Y."/>
            <person name="Nakasone K."/>
            <person name="Hirama C."/>
            <person name="Inoue A."/>
            <person name="Horikoshi K."/>
        </authorList>
    </citation>
    <scope>NUCLEOTIDE SEQUENCE [GENOMIC DNA]</scope>
    <source>
        <strain>ATCC BAA-125 / DSM 18197 / FERM 7344 / JCM 9153 / C-125</strain>
    </source>
</reference>
<reference key="2">
    <citation type="journal article" date="2000" name="Nucleic Acids Res.">
        <title>Complete genome sequence of the alkaliphilic bacterium Bacillus halodurans and genomic sequence comparison with Bacillus subtilis.</title>
        <authorList>
            <person name="Takami H."/>
            <person name="Nakasone K."/>
            <person name="Takaki Y."/>
            <person name="Maeno G."/>
            <person name="Sasaki R."/>
            <person name="Masui N."/>
            <person name="Fuji F."/>
            <person name="Hirama C."/>
            <person name="Nakamura Y."/>
            <person name="Ogasawara N."/>
            <person name="Kuhara S."/>
            <person name="Horikoshi K."/>
        </authorList>
    </citation>
    <scope>NUCLEOTIDE SEQUENCE [LARGE SCALE GENOMIC DNA]</scope>
    <source>
        <strain>ATCC BAA-125 / DSM 18197 / FERM 7344 / JCM 9153 / C-125</strain>
    </source>
</reference>
<dbReference type="EMBL" id="AB017508">
    <property type="protein sequence ID" value="BAA75273.1"/>
    <property type="molecule type" value="Genomic_DNA"/>
</dbReference>
<dbReference type="EMBL" id="BA000004">
    <property type="protein sequence ID" value="BAB03855.1"/>
    <property type="molecule type" value="Genomic_DNA"/>
</dbReference>
<dbReference type="PIR" id="T44385">
    <property type="entry name" value="T44385"/>
</dbReference>
<dbReference type="RefSeq" id="WP_010896319.1">
    <property type="nucleotide sequence ID" value="NC_002570.2"/>
</dbReference>
<dbReference type="SMR" id="Q9Z9L2"/>
<dbReference type="STRING" id="272558.gene:10725976"/>
<dbReference type="GeneID" id="87595677"/>
<dbReference type="KEGG" id="bha:BH0136"/>
<dbReference type="eggNOG" id="COG0089">
    <property type="taxonomic scope" value="Bacteria"/>
</dbReference>
<dbReference type="HOGENOM" id="CLU_037562_3_2_9"/>
<dbReference type="OrthoDB" id="9793353at2"/>
<dbReference type="Proteomes" id="UP000001258">
    <property type="component" value="Chromosome"/>
</dbReference>
<dbReference type="GO" id="GO:1990904">
    <property type="term" value="C:ribonucleoprotein complex"/>
    <property type="evidence" value="ECO:0007669"/>
    <property type="project" value="UniProtKB-KW"/>
</dbReference>
<dbReference type="GO" id="GO:0005840">
    <property type="term" value="C:ribosome"/>
    <property type="evidence" value="ECO:0007669"/>
    <property type="project" value="UniProtKB-KW"/>
</dbReference>
<dbReference type="GO" id="GO:0019843">
    <property type="term" value="F:rRNA binding"/>
    <property type="evidence" value="ECO:0007669"/>
    <property type="project" value="UniProtKB-UniRule"/>
</dbReference>
<dbReference type="GO" id="GO:0003735">
    <property type="term" value="F:structural constituent of ribosome"/>
    <property type="evidence" value="ECO:0007669"/>
    <property type="project" value="InterPro"/>
</dbReference>
<dbReference type="GO" id="GO:0006412">
    <property type="term" value="P:translation"/>
    <property type="evidence" value="ECO:0007669"/>
    <property type="project" value="UniProtKB-UniRule"/>
</dbReference>
<dbReference type="FunFam" id="3.30.70.330:FF:000001">
    <property type="entry name" value="50S ribosomal protein L23"/>
    <property type="match status" value="1"/>
</dbReference>
<dbReference type="Gene3D" id="3.30.70.330">
    <property type="match status" value="1"/>
</dbReference>
<dbReference type="HAMAP" id="MF_01369_B">
    <property type="entry name" value="Ribosomal_uL23_B"/>
    <property type="match status" value="1"/>
</dbReference>
<dbReference type="InterPro" id="IPR012677">
    <property type="entry name" value="Nucleotide-bd_a/b_plait_sf"/>
</dbReference>
<dbReference type="InterPro" id="IPR013025">
    <property type="entry name" value="Ribosomal_uL23-like"/>
</dbReference>
<dbReference type="InterPro" id="IPR012678">
    <property type="entry name" value="Ribosomal_uL23/eL15/eS24_sf"/>
</dbReference>
<dbReference type="InterPro" id="IPR001014">
    <property type="entry name" value="Ribosomal_uL23_CS"/>
</dbReference>
<dbReference type="NCBIfam" id="NF004363">
    <property type="entry name" value="PRK05738.2-4"/>
    <property type="match status" value="1"/>
</dbReference>
<dbReference type="PANTHER" id="PTHR11620">
    <property type="entry name" value="60S RIBOSOMAL PROTEIN L23A"/>
    <property type="match status" value="1"/>
</dbReference>
<dbReference type="Pfam" id="PF00276">
    <property type="entry name" value="Ribosomal_L23"/>
    <property type="match status" value="1"/>
</dbReference>
<dbReference type="SUPFAM" id="SSF54189">
    <property type="entry name" value="Ribosomal proteins S24e, L23 and L15e"/>
    <property type="match status" value="1"/>
</dbReference>
<dbReference type="PROSITE" id="PS00050">
    <property type="entry name" value="RIBOSOMAL_L23"/>
    <property type="match status" value="1"/>
</dbReference>
<comment type="function">
    <text evidence="1">One of the early assembly proteins it binds 23S rRNA. One of the proteins that surrounds the polypeptide exit tunnel on the outside of the ribosome. Forms the main docking site for trigger factor binding to the ribosome.</text>
</comment>
<comment type="subunit">
    <text evidence="1">Part of the 50S ribosomal subunit. Contacts protein L29, and trigger factor when it is bound to the ribosome.</text>
</comment>
<comment type="similarity">
    <text evidence="1">Belongs to the universal ribosomal protein uL23 family.</text>
</comment>